<proteinExistence type="inferred from homology"/>
<comment type="function">
    <text evidence="1">Component of the 90S pre-ribosome involved in the maturation of rRNAs. Required for early cleavages of the pre-RNAs in the 40S ribosomal subunit maturation pathway (By similarity).</text>
</comment>
<comment type="subunit">
    <text evidence="1">Associates with 90S and pre-40S pre-ribosomal particles.</text>
</comment>
<comment type="subcellular location">
    <subcellularLocation>
        <location evidence="1">Nucleus</location>
        <location evidence="1">Nucleolus</location>
    </subcellularLocation>
</comment>
<comment type="similarity">
    <text evidence="4">Belongs to the RRP36 family.</text>
</comment>
<sequence>MPRRDRIKPSFEDDESFENEFDYRYKRGKEQTSLNSDNENSESGSGSEQEEHENEHDVDDEMASISFGALNRAQARLKQEQLRRSQRDYESDSDSDSAPEETSSSSQPTNKKRSKHAPAVSSTKKPVSRIRDIPGLPSRKSQTLHSDIRFDAAYGKADLNQARKNYAFLDEYRKQEIANMESILKDKKSKLNESEKEEIRLQLQSLKSRMDSLKNRDLENLILKEYKKKQYQNVKEGKSSQPHFLKRSDKRKILQKAKFDSMKPKQRERAMERKRKKRLGKEFRQLEFRPLN</sequence>
<name>RRP36_LODEL</name>
<dbReference type="EMBL" id="CH981527">
    <property type="protein sequence ID" value="EDK45049.1"/>
    <property type="molecule type" value="Genomic_DNA"/>
</dbReference>
<dbReference type="RefSeq" id="XP_001525300.1">
    <property type="nucleotide sequence ID" value="XM_001525250.1"/>
</dbReference>
<dbReference type="SMR" id="A5E0U1"/>
<dbReference type="FunCoup" id="A5E0U1">
    <property type="interactions" value="550"/>
</dbReference>
<dbReference type="STRING" id="379508.A5E0U1"/>
<dbReference type="GeneID" id="5232799"/>
<dbReference type="KEGG" id="lel:PVL30_002724"/>
<dbReference type="VEuPathDB" id="FungiDB:LELG_03228"/>
<dbReference type="eggNOG" id="KOG3190">
    <property type="taxonomic scope" value="Eukaryota"/>
</dbReference>
<dbReference type="HOGENOM" id="CLU_048802_3_0_1"/>
<dbReference type="InParanoid" id="A5E0U1"/>
<dbReference type="OMA" id="ERKEMPW"/>
<dbReference type="OrthoDB" id="448446at2759"/>
<dbReference type="Proteomes" id="UP000001996">
    <property type="component" value="Unassembled WGS sequence"/>
</dbReference>
<dbReference type="GO" id="GO:0030686">
    <property type="term" value="C:90S preribosome"/>
    <property type="evidence" value="ECO:0007669"/>
    <property type="project" value="EnsemblFungi"/>
</dbReference>
<dbReference type="GO" id="GO:0005730">
    <property type="term" value="C:nucleolus"/>
    <property type="evidence" value="ECO:0007669"/>
    <property type="project" value="UniProtKB-SubCell"/>
</dbReference>
<dbReference type="GO" id="GO:0032040">
    <property type="term" value="C:small-subunit processome"/>
    <property type="evidence" value="ECO:0007669"/>
    <property type="project" value="EnsemblFungi"/>
</dbReference>
<dbReference type="GO" id="GO:0000462">
    <property type="term" value="P:maturation of SSU-rRNA from tricistronic rRNA transcript (SSU-rRNA, 5.8S rRNA, LSU-rRNA)"/>
    <property type="evidence" value="ECO:0007669"/>
    <property type="project" value="EnsemblFungi"/>
</dbReference>
<dbReference type="InterPro" id="IPR009292">
    <property type="entry name" value="RRP36"/>
</dbReference>
<dbReference type="PANTHER" id="PTHR21738">
    <property type="entry name" value="RIBOSOMAL RNA PROCESSING PROTEIN 36 HOMOLOG"/>
    <property type="match status" value="1"/>
</dbReference>
<dbReference type="PANTHER" id="PTHR21738:SF0">
    <property type="entry name" value="RIBOSOMAL RNA PROCESSING PROTEIN 36 HOMOLOG"/>
    <property type="match status" value="1"/>
</dbReference>
<dbReference type="Pfam" id="PF06102">
    <property type="entry name" value="RRP36"/>
    <property type="match status" value="1"/>
</dbReference>
<feature type="chain" id="PRO_0000397637" description="rRNA biogenesis protein RRP36">
    <location>
        <begin position="1"/>
        <end position="292"/>
    </location>
</feature>
<feature type="region of interest" description="Disordered" evidence="3">
    <location>
        <begin position="1"/>
        <end position="145"/>
    </location>
</feature>
<feature type="region of interest" description="Disordered" evidence="3">
    <location>
        <begin position="255"/>
        <end position="292"/>
    </location>
</feature>
<feature type="coiled-coil region" evidence="2">
    <location>
        <begin position="173"/>
        <end position="217"/>
    </location>
</feature>
<feature type="compositionally biased region" description="Basic and acidic residues" evidence="3">
    <location>
        <begin position="21"/>
        <end position="30"/>
    </location>
</feature>
<feature type="compositionally biased region" description="Low complexity" evidence="3">
    <location>
        <begin position="35"/>
        <end position="47"/>
    </location>
</feature>
<feature type="compositionally biased region" description="Acidic residues" evidence="3">
    <location>
        <begin position="48"/>
        <end position="62"/>
    </location>
</feature>
<feature type="compositionally biased region" description="Basic and acidic residues" evidence="3">
    <location>
        <begin position="77"/>
        <end position="90"/>
    </location>
</feature>
<feature type="compositionally biased region" description="Basic and acidic residues" evidence="3">
    <location>
        <begin position="257"/>
        <end position="271"/>
    </location>
</feature>
<feature type="compositionally biased region" description="Basic and acidic residues" evidence="3">
    <location>
        <begin position="280"/>
        <end position="292"/>
    </location>
</feature>
<accession>A5E0U1</accession>
<evidence type="ECO:0000250" key="1"/>
<evidence type="ECO:0000255" key="2"/>
<evidence type="ECO:0000256" key="3">
    <source>
        <dbReference type="SAM" id="MobiDB-lite"/>
    </source>
</evidence>
<evidence type="ECO:0000305" key="4"/>
<protein>
    <recommendedName>
        <fullName>rRNA biogenesis protein RRP36</fullName>
    </recommendedName>
    <alternativeName>
        <fullName>Ribosomal RNA-processing protein 36</fullName>
    </alternativeName>
</protein>
<gene>
    <name type="primary">RRP36</name>
    <name type="ORF">LELG_03228</name>
</gene>
<reference key="1">
    <citation type="journal article" date="2009" name="Nature">
        <title>Evolution of pathogenicity and sexual reproduction in eight Candida genomes.</title>
        <authorList>
            <person name="Butler G."/>
            <person name="Rasmussen M.D."/>
            <person name="Lin M.F."/>
            <person name="Santos M.A.S."/>
            <person name="Sakthikumar S."/>
            <person name="Munro C.A."/>
            <person name="Rheinbay E."/>
            <person name="Grabherr M."/>
            <person name="Forche A."/>
            <person name="Reedy J.L."/>
            <person name="Agrafioti I."/>
            <person name="Arnaud M.B."/>
            <person name="Bates S."/>
            <person name="Brown A.J.P."/>
            <person name="Brunke S."/>
            <person name="Costanzo M.C."/>
            <person name="Fitzpatrick D.A."/>
            <person name="de Groot P.W.J."/>
            <person name="Harris D."/>
            <person name="Hoyer L.L."/>
            <person name="Hube B."/>
            <person name="Klis F.M."/>
            <person name="Kodira C."/>
            <person name="Lennard N."/>
            <person name="Logue M.E."/>
            <person name="Martin R."/>
            <person name="Neiman A.M."/>
            <person name="Nikolaou E."/>
            <person name="Quail M.A."/>
            <person name="Quinn J."/>
            <person name="Santos M.C."/>
            <person name="Schmitzberger F.F."/>
            <person name="Sherlock G."/>
            <person name="Shah P."/>
            <person name="Silverstein K.A.T."/>
            <person name="Skrzypek M.S."/>
            <person name="Soll D."/>
            <person name="Staggs R."/>
            <person name="Stansfield I."/>
            <person name="Stumpf M.P.H."/>
            <person name="Sudbery P.E."/>
            <person name="Srikantha T."/>
            <person name="Zeng Q."/>
            <person name="Berman J."/>
            <person name="Berriman M."/>
            <person name="Heitman J."/>
            <person name="Gow N.A.R."/>
            <person name="Lorenz M.C."/>
            <person name="Birren B.W."/>
            <person name="Kellis M."/>
            <person name="Cuomo C.A."/>
        </authorList>
    </citation>
    <scope>NUCLEOTIDE SEQUENCE [LARGE SCALE GENOMIC DNA]</scope>
    <source>
        <strain>ATCC 11503 / BCRC 21390 / CBS 2605 / JCM 1781 / NBRC 1676 / NRRL YB-4239</strain>
    </source>
</reference>
<organism>
    <name type="scientific">Lodderomyces elongisporus (strain ATCC 11503 / CBS 2605 / JCM 1781 / NBRC 1676 / NRRL YB-4239)</name>
    <name type="common">Yeast</name>
    <name type="synonym">Saccharomyces elongisporus</name>
    <dbReference type="NCBI Taxonomy" id="379508"/>
    <lineage>
        <taxon>Eukaryota</taxon>
        <taxon>Fungi</taxon>
        <taxon>Dikarya</taxon>
        <taxon>Ascomycota</taxon>
        <taxon>Saccharomycotina</taxon>
        <taxon>Pichiomycetes</taxon>
        <taxon>Debaryomycetaceae</taxon>
        <taxon>Candida/Lodderomyces clade</taxon>
        <taxon>Lodderomyces</taxon>
    </lineage>
</organism>
<keyword id="KW-0175">Coiled coil</keyword>
<keyword id="KW-0539">Nucleus</keyword>
<keyword id="KW-1185">Reference proteome</keyword>
<keyword id="KW-0687">Ribonucleoprotein</keyword>
<keyword id="KW-0690">Ribosome biogenesis</keyword>
<keyword id="KW-0698">rRNA processing</keyword>